<reference key="1">
    <citation type="journal article" date="2008" name="Genome Biol.">
        <title>Encapsulated in silica: genome, proteome and physiology of the thermophilic bacterium Anoxybacillus flavithermus WK1.</title>
        <authorList>
            <person name="Saw J.H."/>
            <person name="Mountain B.W."/>
            <person name="Feng L."/>
            <person name="Omelchenko M.V."/>
            <person name="Hou S."/>
            <person name="Saito J.A."/>
            <person name="Stott M.B."/>
            <person name="Li D."/>
            <person name="Zhao G."/>
            <person name="Wu J."/>
            <person name="Galperin M.Y."/>
            <person name="Koonin E.V."/>
            <person name="Makarova K.S."/>
            <person name="Wolf Y.I."/>
            <person name="Rigden D.J."/>
            <person name="Dunfield P.F."/>
            <person name="Wang L."/>
            <person name="Alam M."/>
        </authorList>
    </citation>
    <scope>NUCLEOTIDE SEQUENCE [LARGE SCALE GENOMIC DNA]</scope>
    <source>
        <strain>DSM 21510 / WK1</strain>
    </source>
</reference>
<comment type="function">
    <text evidence="1">Specifically methylates guanosine-37 in various tRNAs.</text>
</comment>
<comment type="catalytic activity">
    <reaction evidence="1">
        <text>guanosine(37) in tRNA + S-adenosyl-L-methionine = N(1)-methylguanosine(37) in tRNA + S-adenosyl-L-homocysteine + H(+)</text>
        <dbReference type="Rhea" id="RHEA:36899"/>
        <dbReference type="Rhea" id="RHEA-COMP:10145"/>
        <dbReference type="Rhea" id="RHEA-COMP:10147"/>
        <dbReference type="ChEBI" id="CHEBI:15378"/>
        <dbReference type="ChEBI" id="CHEBI:57856"/>
        <dbReference type="ChEBI" id="CHEBI:59789"/>
        <dbReference type="ChEBI" id="CHEBI:73542"/>
        <dbReference type="ChEBI" id="CHEBI:74269"/>
        <dbReference type="EC" id="2.1.1.228"/>
    </reaction>
</comment>
<comment type="subunit">
    <text evidence="1">Homodimer.</text>
</comment>
<comment type="subcellular location">
    <subcellularLocation>
        <location evidence="1">Cytoplasm</location>
    </subcellularLocation>
</comment>
<comment type="similarity">
    <text evidence="1">Belongs to the RNA methyltransferase TrmD family.</text>
</comment>
<sequence length="245" mass="28414">MKIDVLTLFPNMFTGVLNESILKRAQEKGAVTFQLVNFREFADNKHQTVDDYPYGGGAGMVLKPQPIFDAVDHVTKQSEHRPRVILLCPQGERYTQKKAEELAKERHIIFICGHYEGYDERIREHLVTDEISIGDYVLTGGELAAMVVIDSVVRLLPGVLGNEHSSMLDSYSSGLLEHPHYTRPADFRGMKVPDVLLSGNHRLIEEWRQKESLRRTWLRRPDLLETYELTEQQKKWIEQWKKNER</sequence>
<keyword id="KW-0963">Cytoplasm</keyword>
<keyword id="KW-0489">Methyltransferase</keyword>
<keyword id="KW-0949">S-adenosyl-L-methionine</keyword>
<keyword id="KW-0808">Transferase</keyword>
<keyword id="KW-0819">tRNA processing</keyword>
<protein>
    <recommendedName>
        <fullName evidence="1">tRNA (guanine-N(1)-)-methyltransferase</fullName>
        <ecNumber evidence="1">2.1.1.228</ecNumber>
    </recommendedName>
    <alternativeName>
        <fullName evidence="1">M1G-methyltransferase</fullName>
    </alternativeName>
    <alternativeName>
        <fullName evidence="1">tRNA [GM37] methyltransferase</fullName>
    </alternativeName>
</protein>
<accession>B7GGD9</accession>
<proteinExistence type="inferred from homology"/>
<organism>
    <name type="scientific">Anoxybacillus flavithermus (strain DSM 21510 / WK1)</name>
    <dbReference type="NCBI Taxonomy" id="491915"/>
    <lineage>
        <taxon>Bacteria</taxon>
        <taxon>Bacillati</taxon>
        <taxon>Bacillota</taxon>
        <taxon>Bacilli</taxon>
        <taxon>Bacillales</taxon>
        <taxon>Anoxybacillaceae</taxon>
        <taxon>Anoxybacillus</taxon>
    </lineage>
</organism>
<dbReference type="EC" id="2.1.1.228" evidence="1"/>
<dbReference type="EMBL" id="CP000922">
    <property type="protein sequence ID" value="ACJ34121.1"/>
    <property type="molecule type" value="Genomic_DNA"/>
</dbReference>
<dbReference type="RefSeq" id="WP_012575325.1">
    <property type="nucleotide sequence ID" value="NC_011567.1"/>
</dbReference>
<dbReference type="SMR" id="B7GGD9"/>
<dbReference type="STRING" id="491915.Aflv_1760"/>
<dbReference type="GeneID" id="7038013"/>
<dbReference type="KEGG" id="afl:Aflv_1760"/>
<dbReference type="PATRIC" id="fig|491915.6.peg.1809"/>
<dbReference type="eggNOG" id="COG0336">
    <property type="taxonomic scope" value="Bacteria"/>
</dbReference>
<dbReference type="HOGENOM" id="CLU_047363_0_1_9"/>
<dbReference type="Proteomes" id="UP000000742">
    <property type="component" value="Chromosome"/>
</dbReference>
<dbReference type="GO" id="GO:0005829">
    <property type="term" value="C:cytosol"/>
    <property type="evidence" value="ECO:0007669"/>
    <property type="project" value="TreeGrafter"/>
</dbReference>
<dbReference type="GO" id="GO:0052906">
    <property type="term" value="F:tRNA (guanine(37)-N1)-methyltransferase activity"/>
    <property type="evidence" value="ECO:0007669"/>
    <property type="project" value="UniProtKB-UniRule"/>
</dbReference>
<dbReference type="GO" id="GO:0002939">
    <property type="term" value="P:tRNA N1-guanine methylation"/>
    <property type="evidence" value="ECO:0007669"/>
    <property type="project" value="TreeGrafter"/>
</dbReference>
<dbReference type="CDD" id="cd18080">
    <property type="entry name" value="TrmD-like"/>
    <property type="match status" value="1"/>
</dbReference>
<dbReference type="FunFam" id="1.10.1270.20:FF:000001">
    <property type="entry name" value="tRNA (guanine-N(1)-)-methyltransferase"/>
    <property type="match status" value="1"/>
</dbReference>
<dbReference type="FunFam" id="3.40.1280.10:FF:000001">
    <property type="entry name" value="tRNA (guanine-N(1)-)-methyltransferase"/>
    <property type="match status" value="1"/>
</dbReference>
<dbReference type="Gene3D" id="3.40.1280.10">
    <property type="match status" value="1"/>
</dbReference>
<dbReference type="Gene3D" id="1.10.1270.20">
    <property type="entry name" value="tRNA(m1g37)methyltransferase, domain 2"/>
    <property type="match status" value="1"/>
</dbReference>
<dbReference type="HAMAP" id="MF_00605">
    <property type="entry name" value="TrmD"/>
    <property type="match status" value="1"/>
</dbReference>
<dbReference type="InterPro" id="IPR029028">
    <property type="entry name" value="Alpha/beta_knot_MTases"/>
</dbReference>
<dbReference type="InterPro" id="IPR023148">
    <property type="entry name" value="tRNA_m1G_MeTrfase_C_sf"/>
</dbReference>
<dbReference type="InterPro" id="IPR002649">
    <property type="entry name" value="tRNA_m1G_MeTrfase_TrmD"/>
</dbReference>
<dbReference type="InterPro" id="IPR029026">
    <property type="entry name" value="tRNA_m1G_MTases_N"/>
</dbReference>
<dbReference type="InterPro" id="IPR016009">
    <property type="entry name" value="tRNA_MeTrfase_TRMD/TRM10"/>
</dbReference>
<dbReference type="NCBIfam" id="NF000648">
    <property type="entry name" value="PRK00026.1"/>
    <property type="match status" value="1"/>
</dbReference>
<dbReference type="NCBIfam" id="TIGR00088">
    <property type="entry name" value="trmD"/>
    <property type="match status" value="1"/>
</dbReference>
<dbReference type="PANTHER" id="PTHR46417">
    <property type="entry name" value="TRNA (GUANINE-N(1)-)-METHYLTRANSFERASE"/>
    <property type="match status" value="1"/>
</dbReference>
<dbReference type="PANTHER" id="PTHR46417:SF1">
    <property type="entry name" value="TRNA (GUANINE-N(1)-)-METHYLTRANSFERASE"/>
    <property type="match status" value="1"/>
</dbReference>
<dbReference type="Pfam" id="PF01746">
    <property type="entry name" value="tRNA_m1G_MT"/>
    <property type="match status" value="1"/>
</dbReference>
<dbReference type="PIRSF" id="PIRSF000386">
    <property type="entry name" value="tRNA_mtase"/>
    <property type="match status" value="1"/>
</dbReference>
<dbReference type="SUPFAM" id="SSF75217">
    <property type="entry name" value="alpha/beta knot"/>
    <property type="match status" value="1"/>
</dbReference>
<feature type="chain" id="PRO_1000130129" description="tRNA (guanine-N(1)-)-methyltransferase">
    <location>
        <begin position="1"/>
        <end position="245"/>
    </location>
</feature>
<feature type="binding site" evidence="1">
    <location>
        <position position="113"/>
    </location>
    <ligand>
        <name>S-adenosyl-L-methionine</name>
        <dbReference type="ChEBI" id="CHEBI:59789"/>
    </ligand>
</feature>
<feature type="binding site" evidence="1">
    <location>
        <begin position="133"/>
        <end position="138"/>
    </location>
    <ligand>
        <name>S-adenosyl-L-methionine</name>
        <dbReference type="ChEBI" id="CHEBI:59789"/>
    </ligand>
</feature>
<evidence type="ECO:0000255" key="1">
    <source>
        <dbReference type="HAMAP-Rule" id="MF_00605"/>
    </source>
</evidence>
<name>TRMD_ANOFW</name>
<gene>
    <name evidence="1" type="primary">trmD</name>
    <name type="ordered locus">Aflv_1760</name>
</gene>